<accession>Q60BP6</accession>
<keyword id="KW-0997">Cell inner membrane</keyword>
<keyword id="KW-1003">Cell membrane</keyword>
<keyword id="KW-0201">Cytochrome c-type biogenesis</keyword>
<keyword id="KW-0349">Heme</keyword>
<keyword id="KW-0408">Iron</keyword>
<keyword id="KW-0472">Membrane</keyword>
<keyword id="KW-0479">Metal-binding</keyword>
<keyword id="KW-1185">Reference proteome</keyword>
<keyword id="KW-0735">Signal-anchor</keyword>
<keyword id="KW-0812">Transmembrane</keyword>
<keyword id="KW-1133">Transmembrane helix</keyword>
<comment type="function">
    <text evidence="1">Heme chaperone required for the biogenesis of c-type cytochromes. Transiently binds heme delivered by CcmC and transfers the heme to apo-cytochromes in a process facilitated by CcmF and CcmH.</text>
</comment>
<comment type="subcellular location">
    <subcellularLocation>
        <location evidence="1">Cell inner membrane</location>
        <topology evidence="1">Single-pass type II membrane protein</topology>
        <orientation evidence="1">Periplasmic side</orientation>
    </subcellularLocation>
</comment>
<comment type="similarity">
    <text evidence="1">Belongs to the CcmE/CycJ family.</text>
</comment>
<gene>
    <name evidence="1" type="primary">ccmE</name>
    <name evidence="1" type="synonym">cycJ</name>
    <name type="ordered locus">MCA0419</name>
</gene>
<protein>
    <recommendedName>
        <fullName evidence="1">Cytochrome c-type biogenesis protein CcmE</fullName>
    </recommendedName>
    <alternativeName>
        <fullName evidence="1">Cytochrome c maturation protein E</fullName>
    </alternativeName>
    <alternativeName>
        <fullName evidence="1">Heme chaperone CcmE</fullName>
    </alternativeName>
</protein>
<evidence type="ECO:0000255" key="1">
    <source>
        <dbReference type="HAMAP-Rule" id="MF_01959"/>
    </source>
</evidence>
<evidence type="ECO:0000256" key="2">
    <source>
        <dbReference type="SAM" id="MobiDB-lite"/>
    </source>
</evidence>
<proteinExistence type="inferred from homology"/>
<feature type="chain" id="PRO_0000238822" description="Cytochrome c-type biogenesis protein CcmE">
    <location>
        <begin position="1"/>
        <end position="153"/>
    </location>
</feature>
<feature type="topological domain" description="Cytoplasmic" evidence="1">
    <location>
        <begin position="1"/>
        <end position="8"/>
    </location>
</feature>
<feature type="transmembrane region" description="Helical; Signal-anchor for type II membrane protein" evidence="1">
    <location>
        <begin position="9"/>
        <end position="29"/>
    </location>
</feature>
<feature type="topological domain" description="Periplasmic" evidence="1">
    <location>
        <begin position="30"/>
        <end position="153"/>
    </location>
</feature>
<feature type="region of interest" description="Disordered" evidence="2">
    <location>
        <begin position="134"/>
        <end position="153"/>
    </location>
</feature>
<feature type="binding site" description="covalent" evidence="1">
    <location>
        <position position="124"/>
    </location>
    <ligand>
        <name>heme</name>
        <dbReference type="ChEBI" id="CHEBI:30413"/>
    </ligand>
</feature>
<feature type="binding site" description="axial binding residue" evidence="1">
    <location>
        <position position="128"/>
    </location>
    <ligand>
        <name>heme</name>
        <dbReference type="ChEBI" id="CHEBI:30413"/>
    </ligand>
    <ligandPart>
        <name>Fe</name>
        <dbReference type="ChEBI" id="CHEBI:18248"/>
    </ligandPart>
</feature>
<dbReference type="EMBL" id="AE017282">
    <property type="protein sequence ID" value="AAU90413.1"/>
    <property type="molecule type" value="Genomic_DNA"/>
</dbReference>
<dbReference type="SMR" id="Q60BP6"/>
<dbReference type="STRING" id="243233.MCA0419"/>
<dbReference type="KEGG" id="mca:MCA0419"/>
<dbReference type="eggNOG" id="COG2332">
    <property type="taxonomic scope" value="Bacteria"/>
</dbReference>
<dbReference type="HOGENOM" id="CLU_079503_1_1_6"/>
<dbReference type="Proteomes" id="UP000006821">
    <property type="component" value="Chromosome"/>
</dbReference>
<dbReference type="GO" id="GO:0005886">
    <property type="term" value="C:plasma membrane"/>
    <property type="evidence" value="ECO:0007669"/>
    <property type="project" value="UniProtKB-SubCell"/>
</dbReference>
<dbReference type="GO" id="GO:0020037">
    <property type="term" value="F:heme binding"/>
    <property type="evidence" value="ECO:0007669"/>
    <property type="project" value="InterPro"/>
</dbReference>
<dbReference type="GO" id="GO:0046872">
    <property type="term" value="F:metal ion binding"/>
    <property type="evidence" value="ECO:0007669"/>
    <property type="project" value="UniProtKB-KW"/>
</dbReference>
<dbReference type="GO" id="GO:0017004">
    <property type="term" value="P:cytochrome complex assembly"/>
    <property type="evidence" value="ECO:0007669"/>
    <property type="project" value="UniProtKB-KW"/>
</dbReference>
<dbReference type="FunFam" id="2.40.50.140:FF:000104">
    <property type="entry name" value="Cytochrome c-type biogenesis protein CcmE"/>
    <property type="match status" value="1"/>
</dbReference>
<dbReference type="Gene3D" id="2.40.50.140">
    <property type="entry name" value="Nucleic acid-binding proteins"/>
    <property type="match status" value="1"/>
</dbReference>
<dbReference type="HAMAP" id="MF_01959">
    <property type="entry name" value="CcmE"/>
    <property type="match status" value="1"/>
</dbReference>
<dbReference type="InterPro" id="IPR004329">
    <property type="entry name" value="CcmE"/>
</dbReference>
<dbReference type="InterPro" id="IPR036127">
    <property type="entry name" value="CcmE-like_sf"/>
</dbReference>
<dbReference type="InterPro" id="IPR012340">
    <property type="entry name" value="NA-bd_OB-fold"/>
</dbReference>
<dbReference type="NCBIfam" id="NF009727">
    <property type="entry name" value="PRK13254.1-1"/>
    <property type="match status" value="1"/>
</dbReference>
<dbReference type="NCBIfam" id="NF009729">
    <property type="entry name" value="PRK13254.1-3"/>
    <property type="match status" value="1"/>
</dbReference>
<dbReference type="NCBIfam" id="NF009731">
    <property type="entry name" value="PRK13254.1-5"/>
    <property type="match status" value="1"/>
</dbReference>
<dbReference type="PANTHER" id="PTHR34128">
    <property type="entry name" value="CYTOCHROME C-TYPE BIOGENESIS PROTEIN CCME HOMOLOG, MITOCHONDRIAL"/>
    <property type="match status" value="1"/>
</dbReference>
<dbReference type="PANTHER" id="PTHR34128:SF2">
    <property type="entry name" value="CYTOCHROME C-TYPE BIOGENESIS PROTEIN CCME HOMOLOG, MITOCHONDRIAL"/>
    <property type="match status" value="1"/>
</dbReference>
<dbReference type="Pfam" id="PF03100">
    <property type="entry name" value="CcmE"/>
    <property type="match status" value="1"/>
</dbReference>
<dbReference type="SUPFAM" id="SSF82093">
    <property type="entry name" value="Heme chaperone CcmE"/>
    <property type="match status" value="1"/>
</dbReference>
<name>CCME_METCA</name>
<sequence length="153" mass="16820">MMTPRQRRMTWVALMVAGVSLAAFFALTAFQKNLLYFYTPSQVASGEAPKGYPFRIGGLVVKDSVKREPDSLTVRFEVSDGPNAVPVLYTGILPDLFREGQGIIAVGQIDDGGTFQATEVLAKHDENYMPPEVAESLKKNGGLPADYSEYRKK</sequence>
<organism>
    <name type="scientific">Methylococcus capsulatus (strain ATCC 33009 / NCIMB 11132 / Bath)</name>
    <dbReference type="NCBI Taxonomy" id="243233"/>
    <lineage>
        <taxon>Bacteria</taxon>
        <taxon>Pseudomonadati</taxon>
        <taxon>Pseudomonadota</taxon>
        <taxon>Gammaproteobacteria</taxon>
        <taxon>Methylococcales</taxon>
        <taxon>Methylococcaceae</taxon>
        <taxon>Methylococcus</taxon>
    </lineage>
</organism>
<reference key="1">
    <citation type="journal article" date="2004" name="PLoS Biol.">
        <title>Genomic insights into methanotrophy: the complete genome sequence of Methylococcus capsulatus (Bath).</title>
        <authorList>
            <person name="Ward N.L."/>
            <person name="Larsen O."/>
            <person name="Sakwa J."/>
            <person name="Bruseth L."/>
            <person name="Khouri H.M."/>
            <person name="Durkin A.S."/>
            <person name="Dimitrov G."/>
            <person name="Jiang L."/>
            <person name="Scanlan D."/>
            <person name="Kang K.H."/>
            <person name="Lewis M.R."/>
            <person name="Nelson K.E."/>
            <person name="Methe B.A."/>
            <person name="Wu M."/>
            <person name="Heidelberg J.F."/>
            <person name="Paulsen I.T."/>
            <person name="Fouts D.E."/>
            <person name="Ravel J."/>
            <person name="Tettelin H."/>
            <person name="Ren Q."/>
            <person name="Read T.D."/>
            <person name="DeBoy R.T."/>
            <person name="Seshadri R."/>
            <person name="Salzberg S.L."/>
            <person name="Jensen H.B."/>
            <person name="Birkeland N.K."/>
            <person name="Nelson W.C."/>
            <person name="Dodson R.J."/>
            <person name="Grindhaug S.H."/>
            <person name="Holt I.E."/>
            <person name="Eidhammer I."/>
            <person name="Jonasen I."/>
            <person name="Vanaken S."/>
            <person name="Utterback T.R."/>
            <person name="Feldblyum T.V."/>
            <person name="Fraser C.M."/>
            <person name="Lillehaug J.R."/>
            <person name="Eisen J.A."/>
        </authorList>
    </citation>
    <scope>NUCLEOTIDE SEQUENCE [LARGE SCALE GENOMIC DNA]</scope>
    <source>
        <strain>ATCC 33009 / NCIMB 11132 / Bath</strain>
    </source>
</reference>